<reference key="1">
    <citation type="journal article" date="1997" name="J. Biol. Chem.">
        <title>Molecular cloning and functional characterization of a novel mitogen-activated protein kinase phosphatase, MKP-4.</title>
        <authorList>
            <person name="Muda M."/>
            <person name="Boschert U."/>
            <person name="Smith A."/>
            <person name="Antonsonn B."/>
            <person name="Gillieron C."/>
            <person name="Chabert C."/>
            <person name="Camps M."/>
            <person name="Martinou I."/>
            <person name="Ashworth A."/>
            <person name="Arkinstall S."/>
        </authorList>
    </citation>
    <scope>NUCLEOTIDE SEQUENCE [MRNA]</scope>
    <source>
        <tissue>Placenta</tissue>
    </source>
</reference>
<reference key="2">
    <citation type="journal article" date="2005" name="Nature">
        <title>The DNA sequence of the human X chromosome.</title>
        <authorList>
            <person name="Ross M.T."/>
            <person name="Grafham D.V."/>
            <person name="Coffey A.J."/>
            <person name="Scherer S."/>
            <person name="McLay K."/>
            <person name="Muzny D."/>
            <person name="Platzer M."/>
            <person name="Howell G.R."/>
            <person name="Burrows C."/>
            <person name="Bird C.P."/>
            <person name="Frankish A."/>
            <person name="Lovell F.L."/>
            <person name="Howe K.L."/>
            <person name="Ashurst J.L."/>
            <person name="Fulton R.S."/>
            <person name="Sudbrak R."/>
            <person name="Wen G."/>
            <person name="Jones M.C."/>
            <person name="Hurles M.E."/>
            <person name="Andrews T.D."/>
            <person name="Scott C.E."/>
            <person name="Searle S."/>
            <person name="Ramser J."/>
            <person name="Whittaker A."/>
            <person name="Deadman R."/>
            <person name="Carter N.P."/>
            <person name="Hunt S.E."/>
            <person name="Chen R."/>
            <person name="Cree A."/>
            <person name="Gunaratne P."/>
            <person name="Havlak P."/>
            <person name="Hodgson A."/>
            <person name="Metzker M.L."/>
            <person name="Richards S."/>
            <person name="Scott G."/>
            <person name="Steffen D."/>
            <person name="Sodergren E."/>
            <person name="Wheeler D.A."/>
            <person name="Worley K.C."/>
            <person name="Ainscough R."/>
            <person name="Ambrose K.D."/>
            <person name="Ansari-Lari M.A."/>
            <person name="Aradhya S."/>
            <person name="Ashwell R.I."/>
            <person name="Babbage A.K."/>
            <person name="Bagguley C.L."/>
            <person name="Ballabio A."/>
            <person name="Banerjee R."/>
            <person name="Barker G.E."/>
            <person name="Barlow K.F."/>
            <person name="Barrett I.P."/>
            <person name="Bates K.N."/>
            <person name="Beare D.M."/>
            <person name="Beasley H."/>
            <person name="Beasley O."/>
            <person name="Beck A."/>
            <person name="Bethel G."/>
            <person name="Blechschmidt K."/>
            <person name="Brady N."/>
            <person name="Bray-Allen S."/>
            <person name="Bridgeman A.M."/>
            <person name="Brown A.J."/>
            <person name="Brown M.J."/>
            <person name="Bonnin D."/>
            <person name="Bruford E.A."/>
            <person name="Buhay C."/>
            <person name="Burch P."/>
            <person name="Burford D."/>
            <person name="Burgess J."/>
            <person name="Burrill W."/>
            <person name="Burton J."/>
            <person name="Bye J.M."/>
            <person name="Carder C."/>
            <person name="Carrel L."/>
            <person name="Chako J."/>
            <person name="Chapman J.C."/>
            <person name="Chavez D."/>
            <person name="Chen E."/>
            <person name="Chen G."/>
            <person name="Chen Y."/>
            <person name="Chen Z."/>
            <person name="Chinault C."/>
            <person name="Ciccodicola A."/>
            <person name="Clark S.Y."/>
            <person name="Clarke G."/>
            <person name="Clee C.M."/>
            <person name="Clegg S."/>
            <person name="Clerc-Blankenburg K."/>
            <person name="Clifford K."/>
            <person name="Cobley V."/>
            <person name="Cole C.G."/>
            <person name="Conquer J.S."/>
            <person name="Corby N."/>
            <person name="Connor R.E."/>
            <person name="David R."/>
            <person name="Davies J."/>
            <person name="Davis C."/>
            <person name="Davis J."/>
            <person name="Delgado O."/>
            <person name="Deshazo D."/>
            <person name="Dhami P."/>
            <person name="Ding Y."/>
            <person name="Dinh H."/>
            <person name="Dodsworth S."/>
            <person name="Draper H."/>
            <person name="Dugan-Rocha S."/>
            <person name="Dunham A."/>
            <person name="Dunn M."/>
            <person name="Durbin K.J."/>
            <person name="Dutta I."/>
            <person name="Eades T."/>
            <person name="Ellwood M."/>
            <person name="Emery-Cohen A."/>
            <person name="Errington H."/>
            <person name="Evans K.L."/>
            <person name="Faulkner L."/>
            <person name="Francis F."/>
            <person name="Frankland J."/>
            <person name="Fraser A.E."/>
            <person name="Galgoczy P."/>
            <person name="Gilbert J."/>
            <person name="Gill R."/>
            <person name="Gloeckner G."/>
            <person name="Gregory S.G."/>
            <person name="Gribble S."/>
            <person name="Griffiths C."/>
            <person name="Grocock R."/>
            <person name="Gu Y."/>
            <person name="Gwilliam R."/>
            <person name="Hamilton C."/>
            <person name="Hart E.A."/>
            <person name="Hawes A."/>
            <person name="Heath P.D."/>
            <person name="Heitmann K."/>
            <person name="Hennig S."/>
            <person name="Hernandez J."/>
            <person name="Hinzmann B."/>
            <person name="Ho S."/>
            <person name="Hoffs M."/>
            <person name="Howden P.J."/>
            <person name="Huckle E.J."/>
            <person name="Hume J."/>
            <person name="Hunt P.J."/>
            <person name="Hunt A.R."/>
            <person name="Isherwood J."/>
            <person name="Jacob L."/>
            <person name="Johnson D."/>
            <person name="Jones S."/>
            <person name="de Jong P.J."/>
            <person name="Joseph S.S."/>
            <person name="Keenan S."/>
            <person name="Kelly S."/>
            <person name="Kershaw J.K."/>
            <person name="Khan Z."/>
            <person name="Kioschis P."/>
            <person name="Klages S."/>
            <person name="Knights A.J."/>
            <person name="Kosiura A."/>
            <person name="Kovar-Smith C."/>
            <person name="Laird G.K."/>
            <person name="Langford C."/>
            <person name="Lawlor S."/>
            <person name="Leversha M."/>
            <person name="Lewis L."/>
            <person name="Liu W."/>
            <person name="Lloyd C."/>
            <person name="Lloyd D.M."/>
            <person name="Loulseged H."/>
            <person name="Loveland J.E."/>
            <person name="Lovell J.D."/>
            <person name="Lozado R."/>
            <person name="Lu J."/>
            <person name="Lyne R."/>
            <person name="Ma J."/>
            <person name="Maheshwari M."/>
            <person name="Matthews L.H."/>
            <person name="McDowall J."/>
            <person name="McLaren S."/>
            <person name="McMurray A."/>
            <person name="Meidl P."/>
            <person name="Meitinger T."/>
            <person name="Milne S."/>
            <person name="Miner G."/>
            <person name="Mistry S.L."/>
            <person name="Morgan M."/>
            <person name="Morris S."/>
            <person name="Mueller I."/>
            <person name="Mullikin J.C."/>
            <person name="Nguyen N."/>
            <person name="Nordsiek G."/>
            <person name="Nyakatura G."/>
            <person name="O'dell C.N."/>
            <person name="Okwuonu G."/>
            <person name="Palmer S."/>
            <person name="Pandian R."/>
            <person name="Parker D."/>
            <person name="Parrish J."/>
            <person name="Pasternak S."/>
            <person name="Patel D."/>
            <person name="Pearce A.V."/>
            <person name="Pearson D.M."/>
            <person name="Pelan S.E."/>
            <person name="Perez L."/>
            <person name="Porter K.M."/>
            <person name="Ramsey Y."/>
            <person name="Reichwald K."/>
            <person name="Rhodes S."/>
            <person name="Ridler K.A."/>
            <person name="Schlessinger D."/>
            <person name="Schueler M.G."/>
            <person name="Sehra H.K."/>
            <person name="Shaw-Smith C."/>
            <person name="Shen H."/>
            <person name="Sheridan E.M."/>
            <person name="Shownkeen R."/>
            <person name="Skuce C.D."/>
            <person name="Smith M.L."/>
            <person name="Sotheran E.C."/>
            <person name="Steingruber H.E."/>
            <person name="Steward C.A."/>
            <person name="Storey R."/>
            <person name="Swann R.M."/>
            <person name="Swarbreck D."/>
            <person name="Tabor P.E."/>
            <person name="Taudien S."/>
            <person name="Taylor T."/>
            <person name="Teague B."/>
            <person name="Thomas K."/>
            <person name="Thorpe A."/>
            <person name="Timms K."/>
            <person name="Tracey A."/>
            <person name="Trevanion S."/>
            <person name="Tromans A.C."/>
            <person name="d'Urso M."/>
            <person name="Verduzco D."/>
            <person name="Villasana D."/>
            <person name="Waldron L."/>
            <person name="Wall M."/>
            <person name="Wang Q."/>
            <person name="Warren J."/>
            <person name="Warry G.L."/>
            <person name="Wei X."/>
            <person name="West A."/>
            <person name="Whitehead S.L."/>
            <person name="Whiteley M.N."/>
            <person name="Wilkinson J.E."/>
            <person name="Willey D.L."/>
            <person name="Williams G."/>
            <person name="Williams L."/>
            <person name="Williamson A."/>
            <person name="Williamson H."/>
            <person name="Wilming L."/>
            <person name="Woodmansey R.L."/>
            <person name="Wray P.W."/>
            <person name="Yen J."/>
            <person name="Zhang J."/>
            <person name="Zhou J."/>
            <person name="Zoghbi H."/>
            <person name="Zorilla S."/>
            <person name="Buck D."/>
            <person name="Reinhardt R."/>
            <person name="Poustka A."/>
            <person name="Rosenthal A."/>
            <person name="Lehrach H."/>
            <person name="Meindl A."/>
            <person name="Minx P.J."/>
            <person name="Hillier L.W."/>
            <person name="Willard H.F."/>
            <person name="Wilson R.K."/>
            <person name="Waterston R.H."/>
            <person name="Rice C.M."/>
            <person name="Vaudin M."/>
            <person name="Coulson A."/>
            <person name="Nelson D.L."/>
            <person name="Weinstock G."/>
            <person name="Sulston J.E."/>
            <person name="Durbin R.M."/>
            <person name="Hubbard T."/>
            <person name="Gibbs R.A."/>
            <person name="Beck S."/>
            <person name="Rogers J."/>
            <person name="Bentley D.R."/>
        </authorList>
    </citation>
    <scope>NUCLEOTIDE SEQUENCE [LARGE SCALE GENOMIC DNA]</scope>
</reference>
<reference key="3">
    <citation type="submission" date="2005-09" db="EMBL/GenBank/DDBJ databases">
        <authorList>
            <person name="Mural R.J."/>
            <person name="Istrail S."/>
            <person name="Sutton G.G."/>
            <person name="Florea L."/>
            <person name="Halpern A.L."/>
            <person name="Mobarry C.M."/>
            <person name="Lippert R."/>
            <person name="Walenz B."/>
            <person name="Shatkay H."/>
            <person name="Dew I."/>
            <person name="Miller J.R."/>
            <person name="Flanigan M.J."/>
            <person name="Edwards N.J."/>
            <person name="Bolanos R."/>
            <person name="Fasulo D."/>
            <person name="Halldorsson B.V."/>
            <person name="Hannenhalli S."/>
            <person name="Turner R."/>
            <person name="Yooseph S."/>
            <person name="Lu F."/>
            <person name="Nusskern D.R."/>
            <person name="Shue B.C."/>
            <person name="Zheng X.H."/>
            <person name="Zhong F."/>
            <person name="Delcher A.L."/>
            <person name="Huson D.H."/>
            <person name="Kravitz S.A."/>
            <person name="Mouchard L."/>
            <person name="Reinert K."/>
            <person name="Remington K.A."/>
            <person name="Clark A.G."/>
            <person name="Waterman M.S."/>
            <person name="Eichler E.E."/>
            <person name="Adams M.D."/>
            <person name="Hunkapiller M.W."/>
            <person name="Myers E.W."/>
            <person name="Venter J.C."/>
        </authorList>
    </citation>
    <scope>NUCLEOTIDE SEQUENCE [LARGE SCALE GENOMIC DNA]</scope>
</reference>
<reference key="4">
    <citation type="journal article" date="2008" name="Proc. Natl. Acad. Sci. U.S.A.">
        <title>A quantitative atlas of mitotic phosphorylation.</title>
        <authorList>
            <person name="Dephoure N."/>
            <person name="Zhou C."/>
            <person name="Villen J."/>
            <person name="Beausoleil S.A."/>
            <person name="Bakalarski C.E."/>
            <person name="Elledge S.J."/>
            <person name="Gygi S.P."/>
        </authorList>
    </citation>
    <scope>PHOSPHORYLATION [LARGE SCALE ANALYSIS] AT SER-351</scope>
    <scope>IDENTIFICATION BY MASS SPECTROMETRY [LARGE SCALE ANALYSIS]</scope>
    <source>
        <tissue>Cervix carcinoma</tissue>
    </source>
</reference>
<reference key="5">
    <citation type="journal article" date="2011" name="BMC Syst. Biol.">
        <title>Initial characterization of the human central proteome.</title>
        <authorList>
            <person name="Burkard T.R."/>
            <person name="Planyavsky M."/>
            <person name="Kaupe I."/>
            <person name="Breitwieser F.P."/>
            <person name="Buerckstuemmer T."/>
            <person name="Bennett K.L."/>
            <person name="Superti-Furga G."/>
            <person name="Colinge J."/>
        </authorList>
    </citation>
    <scope>IDENTIFICATION BY MASS SPECTROMETRY [LARGE SCALE ANALYSIS]</scope>
</reference>
<reference key="6">
    <citation type="journal article" date="2013" name="J. Proteome Res.">
        <title>Toward a comprehensive characterization of a human cancer cell phosphoproteome.</title>
        <authorList>
            <person name="Zhou H."/>
            <person name="Di Palma S."/>
            <person name="Preisinger C."/>
            <person name="Peng M."/>
            <person name="Polat A.N."/>
            <person name="Heck A.J."/>
            <person name="Mohammed S."/>
        </authorList>
    </citation>
    <scope>PHOSPHORYLATION [LARGE SCALE ANALYSIS] AT SER-16 AND SER-262</scope>
    <scope>IDENTIFICATION BY MASS SPECTROMETRY [LARGE SCALE ANALYSIS]</scope>
    <source>
        <tissue>Cervix carcinoma</tissue>
        <tissue>Erythroleukemia</tissue>
    </source>
</reference>
<reference key="7">
    <citation type="journal article" date="2007" name="J. Struct. Funct. Genomics">
        <title>Structural genomics of protein phosphatases.</title>
        <authorList>
            <person name="Almo S.C."/>
            <person name="Bonanno J.B."/>
            <person name="Sauder J.M."/>
            <person name="Emtage S."/>
            <person name="Dilorenzo T.P."/>
            <person name="Malashkevich V."/>
            <person name="Wasserman S.R."/>
            <person name="Swaminathan S."/>
            <person name="Eswaramoorthy S."/>
            <person name="Agarwal R."/>
            <person name="Kumaran D."/>
            <person name="Madegowda M."/>
            <person name="Ragumani S."/>
            <person name="Patskovsky Y."/>
            <person name="Alvarado J."/>
            <person name="Ramagopal U.A."/>
            <person name="Faber-Barata J."/>
            <person name="Chance M.R."/>
            <person name="Sali A."/>
            <person name="Fiser A."/>
            <person name="Zhang Z.Y."/>
            <person name="Lawrence D.S."/>
            <person name="Burley S.K."/>
        </authorList>
    </citation>
    <scope>X-RAY CRYSTALLOGRAPHY (1.83 ANGSTROMS) OF 201-345</scope>
</reference>
<sequence length="384" mass="41868">MEGLGRSCLWLRRELSPPRPRLLLLDCRSRELYESARIGGALSVALPALLLRRLRRGSLSVRALLPGPPLQPPPPAPVLLYDQGGGRRRRGEAEAEAEEWEAESVLGTLLQKLREEGYLAYYLQGGFSRFQAECPHLCETSLAGRAGSSMAPVPGPVPVVGLGSLCLGSDCSDAESEADRDSMSCGLDSEGATPPPVGLRASFPVQILPNLYLGSARDSANLESLAKLGIRYILNVTPNLPNFFEKNGDFHYKQIPISDHWSQNLSRFFPEAIEFIDEALSQNCGVLVHCLAGVSRSVTVTVAYLMQKLHLSLNDAYDLVKRKKSNISPNFNFMGQLLDFERSLRLEERHSQEQGSGGQASAASNPPSFFTTPTSDGAFELAPT</sequence>
<feature type="chain" id="PRO_0000094812" description="Dual specificity protein phosphatase 9">
    <location>
        <begin position="1"/>
        <end position="384"/>
    </location>
</feature>
<feature type="domain" description="Rhodanese" evidence="2">
    <location>
        <begin position="18"/>
        <end position="139"/>
    </location>
</feature>
<feature type="domain" description="Tyrosine-protein phosphatase" evidence="1">
    <location>
        <begin position="203"/>
        <end position="346"/>
    </location>
</feature>
<feature type="region of interest" description="Disordered" evidence="3">
    <location>
        <begin position="348"/>
        <end position="384"/>
    </location>
</feature>
<feature type="compositionally biased region" description="Polar residues" evidence="3">
    <location>
        <begin position="359"/>
        <end position="375"/>
    </location>
</feature>
<feature type="active site" description="Phosphocysteine intermediate" evidence="1">
    <location>
        <position position="290"/>
    </location>
</feature>
<feature type="modified residue" description="Phosphoserine" evidence="6">
    <location>
        <position position="16"/>
    </location>
</feature>
<feature type="modified residue" description="Phosphoserine" evidence="6">
    <location>
        <position position="262"/>
    </location>
</feature>
<feature type="modified residue" description="Phosphoserine" evidence="5">
    <location>
        <position position="351"/>
    </location>
</feature>
<feature type="strand" evidence="7">
    <location>
        <begin position="205"/>
        <end position="208"/>
    </location>
</feature>
<feature type="strand" evidence="7">
    <location>
        <begin position="211"/>
        <end position="214"/>
    </location>
</feature>
<feature type="helix" evidence="7">
    <location>
        <begin position="218"/>
        <end position="220"/>
    </location>
</feature>
<feature type="helix" evidence="7">
    <location>
        <begin position="222"/>
        <end position="227"/>
    </location>
</feature>
<feature type="strand" evidence="7">
    <location>
        <begin position="230"/>
        <end position="235"/>
    </location>
</feature>
<feature type="strand" evidence="7">
    <location>
        <begin position="237"/>
        <end position="239"/>
    </location>
</feature>
<feature type="turn" evidence="7">
    <location>
        <begin position="243"/>
        <end position="246"/>
    </location>
</feature>
<feature type="strand" evidence="7">
    <location>
        <begin position="251"/>
        <end position="254"/>
    </location>
</feature>
<feature type="helix" evidence="7">
    <location>
        <begin position="259"/>
        <end position="264"/>
    </location>
</feature>
<feature type="helix" evidence="7">
    <location>
        <begin position="265"/>
        <end position="281"/>
    </location>
</feature>
<feature type="strand" evidence="7">
    <location>
        <begin position="285"/>
        <end position="289"/>
    </location>
</feature>
<feature type="strand" evidence="7">
    <location>
        <begin position="291"/>
        <end position="295"/>
    </location>
</feature>
<feature type="helix" evidence="7">
    <location>
        <begin position="296"/>
        <end position="309"/>
    </location>
</feature>
<feature type="helix" evidence="7">
    <location>
        <begin position="313"/>
        <end position="323"/>
    </location>
</feature>
<feature type="helix" evidence="7">
    <location>
        <begin position="331"/>
        <end position="344"/>
    </location>
</feature>
<gene>
    <name type="primary">DUSP9</name>
    <name type="synonym">MKP4</name>
</gene>
<organism>
    <name type="scientific">Homo sapiens</name>
    <name type="common">Human</name>
    <dbReference type="NCBI Taxonomy" id="9606"/>
    <lineage>
        <taxon>Eukaryota</taxon>
        <taxon>Metazoa</taxon>
        <taxon>Chordata</taxon>
        <taxon>Craniata</taxon>
        <taxon>Vertebrata</taxon>
        <taxon>Euteleostomi</taxon>
        <taxon>Mammalia</taxon>
        <taxon>Eutheria</taxon>
        <taxon>Euarchontoglires</taxon>
        <taxon>Primates</taxon>
        <taxon>Haplorrhini</taxon>
        <taxon>Catarrhini</taxon>
        <taxon>Hominidae</taxon>
        <taxon>Homo</taxon>
    </lineage>
</organism>
<comment type="function">
    <text>Inactivates MAP kinases. Has a specificity for the ERK family.</text>
</comment>
<comment type="catalytic activity">
    <reaction>
        <text>O-phospho-L-tyrosyl-[protein] + H2O = L-tyrosyl-[protein] + phosphate</text>
        <dbReference type="Rhea" id="RHEA:10684"/>
        <dbReference type="Rhea" id="RHEA-COMP:10136"/>
        <dbReference type="Rhea" id="RHEA-COMP:20101"/>
        <dbReference type="ChEBI" id="CHEBI:15377"/>
        <dbReference type="ChEBI" id="CHEBI:43474"/>
        <dbReference type="ChEBI" id="CHEBI:46858"/>
        <dbReference type="ChEBI" id="CHEBI:61978"/>
        <dbReference type="EC" id="3.1.3.48"/>
    </reaction>
</comment>
<comment type="catalytic activity">
    <reaction>
        <text>O-phospho-L-seryl-[protein] + H2O = L-seryl-[protein] + phosphate</text>
        <dbReference type="Rhea" id="RHEA:20629"/>
        <dbReference type="Rhea" id="RHEA-COMP:9863"/>
        <dbReference type="Rhea" id="RHEA-COMP:11604"/>
        <dbReference type="ChEBI" id="CHEBI:15377"/>
        <dbReference type="ChEBI" id="CHEBI:29999"/>
        <dbReference type="ChEBI" id="CHEBI:43474"/>
        <dbReference type="ChEBI" id="CHEBI:83421"/>
        <dbReference type="EC" id="3.1.3.16"/>
    </reaction>
</comment>
<comment type="catalytic activity">
    <reaction>
        <text>O-phospho-L-threonyl-[protein] + H2O = L-threonyl-[protein] + phosphate</text>
        <dbReference type="Rhea" id="RHEA:47004"/>
        <dbReference type="Rhea" id="RHEA-COMP:11060"/>
        <dbReference type="Rhea" id="RHEA-COMP:11605"/>
        <dbReference type="ChEBI" id="CHEBI:15377"/>
        <dbReference type="ChEBI" id="CHEBI:30013"/>
        <dbReference type="ChEBI" id="CHEBI:43474"/>
        <dbReference type="ChEBI" id="CHEBI:61977"/>
        <dbReference type="EC" id="3.1.3.16"/>
    </reaction>
</comment>
<comment type="interaction">
    <interactant intactId="EBI-3906678">
        <id>Q99956</id>
    </interactant>
    <interactant intactId="EBI-959949">
        <id>P28482</id>
        <label>MAPK1</label>
    </interactant>
    <organismsDiffer>false</organismsDiffer>
    <experiments>5</experiments>
</comment>
<comment type="interaction">
    <interactant intactId="EBI-3906678">
        <id>Q99956</id>
    </interactant>
    <interactant intactId="EBI-73946">
        <id>Q16539</id>
        <label>MAPK14</label>
    </interactant>
    <organismsDiffer>false</organismsDiffer>
    <experiments>6</experiments>
</comment>
<comment type="interaction">
    <interactant intactId="EBI-3906678">
        <id>Q99956</id>
    </interactant>
    <interactant intactId="EBI-298727">
        <id>P47811</id>
        <label>Mapk14</label>
    </interactant>
    <organismsDiffer>true</organismsDiffer>
    <experiments>2</experiments>
</comment>
<comment type="subcellular location">
    <subcellularLocation>
        <location>Cytoplasm</location>
    </subcellularLocation>
</comment>
<comment type="similarity">
    <text evidence="4">Belongs to the protein-tyrosine phosphatase family. Non-receptor class dual specificity subfamily.</text>
</comment>
<evidence type="ECO:0000255" key="1">
    <source>
        <dbReference type="PROSITE-ProRule" id="PRU00160"/>
    </source>
</evidence>
<evidence type="ECO:0000255" key="2">
    <source>
        <dbReference type="PROSITE-ProRule" id="PRU00173"/>
    </source>
</evidence>
<evidence type="ECO:0000256" key="3">
    <source>
        <dbReference type="SAM" id="MobiDB-lite"/>
    </source>
</evidence>
<evidence type="ECO:0000305" key="4"/>
<evidence type="ECO:0007744" key="5">
    <source>
    </source>
</evidence>
<evidence type="ECO:0007744" key="6">
    <source>
    </source>
</evidence>
<evidence type="ECO:0007829" key="7">
    <source>
        <dbReference type="PDB" id="2HXP"/>
    </source>
</evidence>
<keyword id="KW-0002">3D-structure</keyword>
<keyword id="KW-0963">Cytoplasm</keyword>
<keyword id="KW-0378">Hydrolase</keyword>
<keyword id="KW-0597">Phosphoprotein</keyword>
<keyword id="KW-0904">Protein phosphatase</keyword>
<keyword id="KW-1267">Proteomics identification</keyword>
<keyword id="KW-1185">Reference proteome</keyword>
<proteinExistence type="evidence at protein level"/>
<accession>Q99956</accession>
<accession>D3DWU5</accession>
<name>DUS9_HUMAN</name>
<dbReference type="EC" id="3.1.3.16"/>
<dbReference type="EC" id="3.1.3.48"/>
<dbReference type="EMBL" id="Y08302">
    <property type="protein sequence ID" value="CAA69610.1"/>
    <property type="molecule type" value="mRNA"/>
</dbReference>
<dbReference type="EMBL" id="U52111">
    <property type="status" value="NOT_ANNOTATED_CDS"/>
    <property type="molecule type" value="Genomic_DNA"/>
</dbReference>
<dbReference type="EMBL" id="CH471172">
    <property type="protein sequence ID" value="EAW72847.1"/>
    <property type="molecule type" value="Genomic_DNA"/>
</dbReference>
<dbReference type="EMBL" id="CH471172">
    <property type="protein sequence ID" value="EAW72848.1"/>
    <property type="molecule type" value="Genomic_DNA"/>
</dbReference>
<dbReference type="EMBL" id="CH471172">
    <property type="protein sequence ID" value="EAW72849.1"/>
    <property type="molecule type" value="Genomic_DNA"/>
</dbReference>
<dbReference type="CCDS" id="CCDS14724.1"/>
<dbReference type="RefSeq" id="NP_001305432.1">
    <property type="nucleotide sequence ID" value="NM_001318503.2"/>
</dbReference>
<dbReference type="RefSeq" id="NP_001386.1">
    <property type="nucleotide sequence ID" value="NM_001395.4"/>
</dbReference>
<dbReference type="RefSeq" id="XP_011529426.1">
    <property type="nucleotide sequence ID" value="XM_011531124.1"/>
</dbReference>
<dbReference type="PDB" id="2HXP">
    <property type="method" value="X-ray"/>
    <property type="resolution" value="1.83 A"/>
    <property type="chains" value="A=201-345"/>
</dbReference>
<dbReference type="PDB" id="3LJ8">
    <property type="method" value="X-ray"/>
    <property type="resolution" value="2.70 A"/>
    <property type="chains" value="A=202-347"/>
</dbReference>
<dbReference type="PDBsum" id="2HXP"/>
<dbReference type="PDBsum" id="3LJ8"/>
<dbReference type="SMR" id="Q99956"/>
<dbReference type="BioGRID" id="108185">
    <property type="interactions" value="99"/>
</dbReference>
<dbReference type="FunCoup" id="Q99956">
    <property type="interactions" value="1471"/>
</dbReference>
<dbReference type="IntAct" id="Q99956">
    <property type="interactions" value="25"/>
</dbReference>
<dbReference type="MINT" id="Q99956"/>
<dbReference type="STRING" id="9606.ENSP00000345853"/>
<dbReference type="DEPOD" id="DUSP9"/>
<dbReference type="GlyGen" id="Q99956">
    <property type="glycosylation" value="1 site"/>
</dbReference>
<dbReference type="iPTMnet" id="Q99956"/>
<dbReference type="PhosphoSitePlus" id="Q99956"/>
<dbReference type="BioMuta" id="DUSP9"/>
<dbReference type="DMDM" id="3913541"/>
<dbReference type="jPOST" id="Q99956"/>
<dbReference type="MassIVE" id="Q99956"/>
<dbReference type="PaxDb" id="9606-ENSP00000345853"/>
<dbReference type="PeptideAtlas" id="Q99956"/>
<dbReference type="ProteomicsDB" id="78541"/>
<dbReference type="Pumba" id="Q99956"/>
<dbReference type="Antibodypedia" id="519">
    <property type="antibodies" value="284 antibodies from 32 providers"/>
</dbReference>
<dbReference type="DNASU" id="1852"/>
<dbReference type="Ensembl" id="ENST00000342782.4">
    <property type="protein sequence ID" value="ENSP00000345853.3"/>
    <property type="gene ID" value="ENSG00000130829.18"/>
</dbReference>
<dbReference type="Ensembl" id="ENST00000370167.8">
    <property type="protein sequence ID" value="ENSP00000359186.4"/>
    <property type="gene ID" value="ENSG00000130829.18"/>
</dbReference>
<dbReference type="GeneID" id="1852"/>
<dbReference type="KEGG" id="hsa:1852"/>
<dbReference type="MANE-Select" id="ENST00000342782.4">
    <property type="protein sequence ID" value="ENSP00000345853.3"/>
    <property type="RefSeq nucleotide sequence ID" value="NM_001318503.2"/>
    <property type="RefSeq protein sequence ID" value="NP_001305432.1"/>
</dbReference>
<dbReference type="UCSC" id="uc004fhx.5">
    <property type="organism name" value="human"/>
</dbReference>
<dbReference type="AGR" id="HGNC:3076"/>
<dbReference type="CTD" id="1852"/>
<dbReference type="DisGeNET" id="1852"/>
<dbReference type="GeneCards" id="DUSP9"/>
<dbReference type="HGNC" id="HGNC:3076">
    <property type="gene designation" value="DUSP9"/>
</dbReference>
<dbReference type="HPA" id="ENSG00000130829">
    <property type="expression patterns" value="Group enriched (kidney, placenta)"/>
</dbReference>
<dbReference type="MalaCards" id="DUSP9"/>
<dbReference type="MIM" id="300134">
    <property type="type" value="gene"/>
</dbReference>
<dbReference type="neXtProt" id="NX_Q99956"/>
<dbReference type="OpenTargets" id="ENSG00000130829"/>
<dbReference type="PharmGKB" id="PA27533"/>
<dbReference type="VEuPathDB" id="HostDB:ENSG00000130829"/>
<dbReference type="eggNOG" id="KOG1717">
    <property type="taxonomic scope" value="Eukaryota"/>
</dbReference>
<dbReference type="GeneTree" id="ENSGT00940000161880"/>
<dbReference type="HOGENOM" id="CLU_027074_0_0_1"/>
<dbReference type="InParanoid" id="Q99956"/>
<dbReference type="OMA" id="CGFSRFQ"/>
<dbReference type="OrthoDB" id="165342at2759"/>
<dbReference type="PAN-GO" id="Q99956">
    <property type="GO annotations" value="7 GO annotations based on evolutionary models"/>
</dbReference>
<dbReference type="PhylomeDB" id="Q99956"/>
<dbReference type="TreeFam" id="TF105122"/>
<dbReference type="BRENDA" id="3.1.3.48">
    <property type="organism ID" value="2681"/>
</dbReference>
<dbReference type="PathwayCommons" id="Q99956"/>
<dbReference type="Reactome" id="R-HSA-112409">
    <property type="pathway name" value="RAF-independent MAPK1/3 activation"/>
</dbReference>
<dbReference type="Reactome" id="R-HSA-5675221">
    <property type="pathway name" value="Negative regulation of MAPK pathway"/>
</dbReference>
<dbReference type="Reactome" id="R-HSA-9652817">
    <property type="pathway name" value="Signaling by MAPK mutants"/>
</dbReference>
<dbReference type="SignaLink" id="Q99956"/>
<dbReference type="SIGNOR" id="Q99956"/>
<dbReference type="BioGRID-ORCS" id="1852">
    <property type="hits" value="18 hits in 791 CRISPR screens"/>
</dbReference>
<dbReference type="ChiTaRS" id="DUSP9">
    <property type="organism name" value="human"/>
</dbReference>
<dbReference type="EvolutionaryTrace" id="Q99956"/>
<dbReference type="GenomeRNAi" id="1852"/>
<dbReference type="Pharos" id="Q99956">
    <property type="development level" value="Tbio"/>
</dbReference>
<dbReference type="PRO" id="PR:Q99956"/>
<dbReference type="Proteomes" id="UP000005640">
    <property type="component" value="Chromosome X"/>
</dbReference>
<dbReference type="RNAct" id="Q99956">
    <property type="molecule type" value="protein"/>
</dbReference>
<dbReference type="Bgee" id="ENSG00000130829">
    <property type="expression patterns" value="Expressed in placenta and 80 other cell types or tissues"/>
</dbReference>
<dbReference type="GO" id="GO:0005737">
    <property type="term" value="C:cytoplasm"/>
    <property type="evidence" value="ECO:0000318"/>
    <property type="project" value="GO_Central"/>
</dbReference>
<dbReference type="GO" id="GO:0005829">
    <property type="term" value="C:cytosol"/>
    <property type="evidence" value="ECO:0000318"/>
    <property type="project" value="GO_Central"/>
</dbReference>
<dbReference type="GO" id="GO:0005634">
    <property type="term" value="C:nucleus"/>
    <property type="evidence" value="ECO:0000304"/>
    <property type="project" value="ProtInc"/>
</dbReference>
<dbReference type="GO" id="GO:0033550">
    <property type="term" value="F:MAP kinase tyrosine phosphatase activity"/>
    <property type="evidence" value="ECO:0000318"/>
    <property type="project" value="GO_Central"/>
</dbReference>
<dbReference type="GO" id="GO:0017017">
    <property type="term" value="F:MAP kinase tyrosine/serine/threonine phosphatase activity"/>
    <property type="evidence" value="ECO:0000318"/>
    <property type="project" value="GO_Central"/>
</dbReference>
<dbReference type="GO" id="GO:0004721">
    <property type="term" value="F:phosphoprotein phosphatase activity"/>
    <property type="evidence" value="ECO:0000304"/>
    <property type="project" value="ProtInc"/>
</dbReference>
<dbReference type="GO" id="GO:0004722">
    <property type="term" value="F:protein serine/threonine phosphatase activity"/>
    <property type="evidence" value="ECO:0007669"/>
    <property type="project" value="UniProtKB-EC"/>
</dbReference>
<dbReference type="GO" id="GO:0008138">
    <property type="term" value="F:protein tyrosine/serine/threonine phosphatase activity"/>
    <property type="evidence" value="ECO:0000304"/>
    <property type="project" value="Reactome"/>
</dbReference>
<dbReference type="GO" id="GO:0008330">
    <property type="term" value="F:protein tyrosine/threonine phosphatase activity"/>
    <property type="evidence" value="ECO:0000318"/>
    <property type="project" value="GO_Central"/>
</dbReference>
<dbReference type="GO" id="GO:0070371">
    <property type="term" value="P:ERK1 and ERK2 cascade"/>
    <property type="evidence" value="ECO:0000304"/>
    <property type="project" value="Reactome"/>
</dbReference>
<dbReference type="GO" id="GO:0007254">
    <property type="term" value="P:JNK cascade"/>
    <property type="evidence" value="ECO:0000304"/>
    <property type="project" value="ProtInc"/>
</dbReference>
<dbReference type="GO" id="GO:0000165">
    <property type="term" value="P:MAPK cascade"/>
    <property type="evidence" value="ECO:0000304"/>
    <property type="project" value="Reactome"/>
</dbReference>
<dbReference type="GO" id="GO:0070373">
    <property type="term" value="P:negative regulation of ERK1 and ERK2 cascade"/>
    <property type="evidence" value="ECO:0000318"/>
    <property type="project" value="GO_Central"/>
</dbReference>
<dbReference type="GO" id="GO:0006470">
    <property type="term" value="P:protein dephosphorylation"/>
    <property type="evidence" value="ECO:0000304"/>
    <property type="project" value="ProtInc"/>
</dbReference>
<dbReference type="GO" id="GO:0007165">
    <property type="term" value="P:signal transduction"/>
    <property type="evidence" value="ECO:0000318"/>
    <property type="project" value="GO_Central"/>
</dbReference>
<dbReference type="CDD" id="cd14644">
    <property type="entry name" value="DSP_DUSP9"/>
    <property type="match status" value="1"/>
</dbReference>
<dbReference type="FunFam" id="3.90.190.10:FF:000011">
    <property type="entry name" value="Dual specificity phosphatase 6"/>
    <property type="match status" value="1"/>
</dbReference>
<dbReference type="FunFam" id="3.40.250.10:FF:000029">
    <property type="entry name" value="Dual specificity phosphatase 9"/>
    <property type="match status" value="1"/>
</dbReference>
<dbReference type="Gene3D" id="3.90.190.10">
    <property type="entry name" value="Protein tyrosine phosphatase superfamily"/>
    <property type="match status" value="1"/>
</dbReference>
<dbReference type="Gene3D" id="3.40.250.10">
    <property type="entry name" value="Rhodanese-like domain"/>
    <property type="match status" value="1"/>
</dbReference>
<dbReference type="InterPro" id="IPR000340">
    <property type="entry name" value="Dual-sp_phosphatase_cat-dom"/>
</dbReference>
<dbReference type="InterPro" id="IPR008343">
    <property type="entry name" value="MKP"/>
</dbReference>
<dbReference type="InterPro" id="IPR029021">
    <property type="entry name" value="Prot-tyrosine_phosphatase-like"/>
</dbReference>
<dbReference type="InterPro" id="IPR001763">
    <property type="entry name" value="Rhodanese-like_dom"/>
</dbReference>
<dbReference type="InterPro" id="IPR036873">
    <property type="entry name" value="Rhodanese-like_dom_sf"/>
</dbReference>
<dbReference type="InterPro" id="IPR000387">
    <property type="entry name" value="Tyr_Pase_dom"/>
</dbReference>
<dbReference type="InterPro" id="IPR020422">
    <property type="entry name" value="TYR_PHOSPHATASE_DUAL_dom"/>
</dbReference>
<dbReference type="PANTHER" id="PTHR10159">
    <property type="entry name" value="DUAL SPECIFICITY PROTEIN PHOSPHATASE"/>
    <property type="match status" value="1"/>
</dbReference>
<dbReference type="PANTHER" id="PTHR10159:SF388">
    <property type="entry name" value="DUAL SPECIFICITY PROTEIN PHOSPHATASE 9"/>
    <property type="match status" value="1"/>
</dbReference>
<dbReference type="Pfam" id="PF00782">
    <property type="entry name" value="DSPc"/>
    <property type="match status" value="1"/>
</dbReference>
<dbReference type="Pfam" id="PF00581">
    <property type="entry name" value="Rhodanese"/>
    <property type="match status" value="1"/>
</dbReference>
<dbReference type="PIRSF" id="PIRSF000939">
    <property type="entry name" value="MAPK_Ptase"/>
    <property type="match status" value="1"/>
</dbReference>
<dbReference type="PRINTS" id="PR01764">
    <property type="entry name" value="MAPKPHPHTASE"/>
</dbReference>
<dbReference type="SMART" id="SM00195">
    <property type="entry name" value="DSPc"/>
    <property type="match status" value="1"/>
</dbReference>
<dbReference type="SMART" id="SM00450">
    <property type="entry name" value="RHOD"/>
    <property type="match status" value="1"/>
</dbReference>
<dbReference type="SUPFAM" id="SSF52799">
    <property type="entry name" value="(Phosphotyrosine protein) phosphatases II"/>
    <property type="match status" value="1"/>
</dbReference>
<dbReference type="SUPFAM" id="SSF52821">
    <property type="entry name" value="Rhodanese/Cell cycle control phosphatase"/>
    <property type="match status" value="1"/>
</dbReference>
<dbReference type="PROSITE" id="PS50206">
    <property type="entry name" value="RHODANESE_3"/>
    <property type="match status" value="1"/>
</dbReference>
<dbReference type="PROSITE" id="PS50056">
    <property type="entry name" value="TYR_PHOSPHATASE_2"/>
    <property type="match status" value="1"/>
</dbReference>
<dbReference type="PROSITE" id="PS50054">
    <property type="entry name" value="TYR_PHOSPHATASE_DUAL"/>
    <property type="match status" value="1"/>
</dbReference>
<protein>
    <recommendedName>
        <fullName>Dual specificity protein phosphatase 9</fullName>
        <ecNumber>3.1.3.16</ecNumber>
        <ecNumber>3.1.3.48</ecNumber>
    </recommendedName>
    <alternativeName>
        <fullName>Mitogen-activated protein kinase phosphatase 4</fullName>
        <shortName>MAP kinase phosphatase 4</shortName>
        <shortName>MKP-4</shortName>
    </alternativeName>
</protein>